<feature type="chain" id="PRO_0000133639" description="Minor capsid protein L2">
    <location>
        <begin position="1"/>
        <end position="466"/>
    </location>
</feature>
<feature type="region of interest" description="Disordered" evidence="2">
    <location>
        <begin position="1"/>
        <end position="25"/>
    </location>
</feature>
<feature type="short sequence motif" description="Nuclear localization signal" evidence="1">
    <location>
        <begin position="7"/>
        <end position="24"/>
    </location>
</feature>
<feature type="short sequence motif" description="Nuclear localization signal" evidence="1">
    <location>
        <begin position="447"/>
        <end position="455"/>
    </location>
</feature>
<feature type="compositionally biased region" description="Basic residues" evidence="2">
    <location>
        <begin position="1"/>
        <end position="13"/>
    </location>
</feature>
<feature type="disulfide bond" evidence="1">
    <location>
        <begin position="33"/>
        <end position="39"/>
    </location>
</feature>
<name>VL2_MMPV1</name>
<reference key="1">
    <citation type="journal article" date="1991" name="Virology">
        <title>Characterization of the complete RhPV 1 genomic sequence and an integration locus from a metastatic tumor.</title>
        <authorList>
            <person name="Ostrow R.S."/>
            <person name="Labresh K.V."/>
            <person name="Faras A.J."/>
        </authorList>
    </citation>
    <scope>NUCLEOTIDE SEQUENCE [GENOMIC DNA]</scope>
</reference>
<comment type="function">
    <text evidence="1">Minor protein of the capsid that localizes along the inner surface of the virion, within the central cavities beneath the L1 pentamers. Plays a role in capsid stabilization through interaction with the major capsid protein L1. Once the virion enters the host cell, L2 escorts the genomic DNA into the nucleus by promoting escape from the endosomal compartments and traffic through the host Golgi network. Mechanistically, the C-terminus of L2 possesses a cell-penetrating peptide that protudes from the host endosome, interacts with host cytoplasmic retromer cargo and thereby mediates the capsid delivery to the host trans-Golgi network. Plays a role through its interaction with host dynein in the intracellular microtubule-dependent transport of viral capsid toward the nucleus. Mediates the viral genome import into the nucleus through binding to host importins. Once within the nucleus, L2 localizes viral genomes to host PML bodies in order to activate early gene expression for establishment of infection. Later on, promotes late gene expression by interacting with the viral E2 protein and by inhibiting its transcriptional activation functions. During virion assembly, encapsidates the genome by direct interaction with the viral DNA.</text>
</comment>
<comment type="subunit">
    <text evidence="1">Interacts with major capsid protein L1. Interacts with E2; this interaction inhibits E2 transcriptional activity but not the DNA replication function E2. Interacts with host GADD45GIP1. Interacts with host HSPA8; this interaction is required for L2 nuclear translocation. Interacts with host importins KPNB2 and KPNB3. Forms a complex with importin alpha2-beta1 heterodimers via interaction with the importin alpha2 adapter. Interacts with host DYNLT1; this interaction is essential for virus intracellular transport during entry. Interacts (via C-terminus) with host retromer subunits VPS35 and VPS29.</text>
</comment>
<comment type="subcellular location">
    <subcellularLocation>
        <location evidence="1">Virion</location>
    </subcellularLocation>
    <subcellularLocation>
        <location evidence="1">Host nucleus</location>
    </subcellularLocation>
    <subcellularLocation>
        <location evidence="1">Host early endosome</location>
    </subcellularLocation>
    <subcellularLocation>
        <location evidence="1">Host Golgi apparatus</location>
    </subcellularLocation>
</comment>
<comment type="PTM">
    <text evidence="1">Highly phosphorylated.</text>
</comment>
<comment type="similarity">
    <text evidence="1">Belongs to the papillomaviridae L2 protein family.</text>
</comment>
<organismHost>
    <name type="scientific">Macaca mulatta</name>
    <name type="common">Rhesus macaque</name>
    <dbReference type="NCBI Taxonomy" id="9544"/>
</organismHost>
<proteinExistence type="inferred from homology"/>
<evidence type="ECO:0000255" key="1">
    <source>
        <dbReference type="HAMAP-Rule" id="MF_04003"/>
    </source>
</evidence>
<evidence type="ECO:0000256" key="2">
    <source>
        <dbReference type="SAM" id="MobiDB-lite"/>
    </source>
</evidence>
<keyword id="KW-0167">Capsid protein</keyword>
<keyword id="KW-1176">Cytoplasmic inwards viral transport</keyword>
<keyword id="KW-1015">Disulfide bond</keyword>
<keyword id="KW-0238">DNA-binding</keyword>
<keyword id="KW-1039">Host endosome</keyword>
<keyword id="KW-1040">Host Golgi apparatus</keyword>
<keyword id="KW-1048">Host nucleus</keyword>
<keyword id="KW-0945">Host-virus interaction</keyword>
<keyword id="KW-0426">Late protein</keyword>
<keyword id="KW-1177">Microtubular inwards viral transport</keyword>
<keyword id="KW-0597">Phosphoprotein</keyword>
<keyword id="KW-1185">Reference proteome</keyword>
<keyword id="KW-1163">Viral penetration into host nucleus</keyword>
<keyword id="KW-0946">Virion</keyword>
<keyword id="KW-1160">Virus entry into host cell</keyword>
<organism>
    <name type="scientific">Macaca mulata papillomavirus 1</name>
    <name type="common">Rhpv 1</name>
    <name type="synonym">Rhesus papillomavirus type 1</name>
    <dbReference type="NCBI Taxonomy" id="2779844"/>
    <lineage>
        <taxon>Viruses</taxon>
        <taxon>Monodnaviria</taxon>
        <taxon>Shotokuvirae</taxon>
        <taxon>Cossaviricota</taxon>
        <taxon>Papovaviricetes</taxon>
        <taxon>Zurhausenvirales</taxon>
        <taxon>Papillomaviridae</taxon>
        <taxon>Firstpapillomavirinae</taxon>
        <taxon>Alphapapillomavirus</taxon>
        <taxon>Rhesus papillomavirus type 1</taxon>
    </lineage>
</organism>
<gene>
    <name evidence="1" type="primary">L2</name>
</gene>
<protein>
    <recommendedName>
        <fullName evidence="1">Minor capsid protein L2</fullName>
    </recommendedName>
</protein>
<sequence>MKHAHLSRRKRAAPRPPGGRQKRASATQLYQTCKAAGTCPPDVIPKVEGTTVADQILKYGSMGVYFGGLGIGSGAGTGGRSGYVPLGSRPASIPEPLPRPPVTIEPVGPSDPSIVSLLEESRLIEAGVPAPTFPTHGGFEISTSEVSTPAVLDVSSGGSDVHVSVTSFTNPTFTEPSVLRPPPPVEASGRLVISASSVSTHSYEEIPMDTFVITGDHNYNTTSTPIPGSRAPARLGLYGRATQQVRVVDPAFITTPARLVTYDNPAYEGVDDATLQFSHSDIHQPPDPDFLDIVALHRPALTSRKGTVRFSRLGQRATLTTRSGKRIGAKVHFYHDLSPIAPAESIELQPLSSQGELYDIYADVDGQEDAAAVANTPLNSNSSGIASPWNTTVPLSAGADVTLQSGPDVSLDAPVAESPVHPGVPLRPSAHIILYGGDFYLHPSYLGIRRKRKRMHNFFSDVYVAA</sequence>
<dbReference type="EMBL" id="M60184">
    <property type="protein sequence ID" value="AAA79317.1"/>
    <property type="molecule type" value="Genomic_DNA"/>
</dbReference>
<dbReference type="PIR" id="G38503">
    <property type="entry name" value="P2WLR1"/>
</dbReference>
<dbReference type="RefSeq" id="NP_043337.1">
    <property type="nucleotide sequence ID" value="NC_001678.1"/>
</dbReference>
<dbReference type="GeneID" id="1489012"/>
<dbReference type="KEGG" id="vg:1489012"/>
<dbReference type="Proteomes" id="UP000008169">
    <property type="component" value="Genome"/>
</dbReference>
<dbReference type="GO" id="GO:0043657">
    <property type="term" value="C:host cell"/>
    <property type="evidence" value="ECO:0007669"/>
    <property type="project" value="GOC"/>
</dbReference>
<dbReference type="GO" id="GO:0044174">
    <property type="term" value="C:host cell endosome"/>
    <property type="evidence" value="ECO:0007669"/>
    <property type="project" value="UniProtKB-KW"/>
</dbReference>
<dbReference type="GO" id="GO:0044177">
    <property type="term" value="C:host cell Golgi apparatus"/>
    <property type="evidence" value="ECO:0007669"/>
    <property type="project" value="UniProtKB-SubCell"/>
</dbReference>
<dbReference type="GO" id="GO:0042025">
    <property type="term" value="C:host cell nucleus"/>
    <property type="evidence" value="ECO:0007669"/>
    <property type="project" value="UniProtKB-SubCell"/>
</dbReference>
<dbReference type="GO" id="GO:0019028">
    <property type="term" value="C:viral capsid"/>
    <property type="evidence" value="ECO:0007669"/>
    <property type="project" value="UniProtKB-UniRule"/>
</dbReference>
<dbReference type="GO" id="GO:0003677">
    <property type="term" value="F:DNA binding"/>
    <property type="evidence" value="ECO:0007669"/>
    <property type="project" value="UniProtKB-UniRule"/>
</dbReference>
<dbReference type="GO" id="GO:0005198">
    <property type="term" value="F:structural molecule activity"/>
    <property type="evidence" value="ECO:0007669"/>
    <property type="project" value="UniProtKB-UniRule"/>
</dbReference>
<dbReference type="GO" id="GO:0075521">
    <property type="term" value="P:microtubule-dependent intracellular transport of viral material towards nucleus"/>
    <property type="evidence" value="ECO:0007669"/>
    <property type="project" value="UniProtKB-UniRule"/>
</dbReference>
<dbReference type="GO" id="GO:0046718">
    <property type="term" value="P:symbiont entry into host cell"/>
    <property type="evidence" value="ECO:0007669"/>
    <property type="project" value="UniProtKB-KW"/>
</dbReference>
<dbReference type="GO" id="GO:0075732">
    <property type="term" value="P:viral penetration into host nucleus"/>
    <property type="evidence" value="ECO:0007669"/>
    <property type="project" value="UniProtKB-KW"/>
</dbReference>
<dbReference type="HAMAP" id="MF_04003">
    <property type="entry name" value="PPV_L2"/>
    <property type="match status" value="1"/>
</dbReference>
<dbReference type="InterPro" id="IPR000784">
    <property type="entry name" value="Late_L2"/>
</dbReference>
<dbReference type="Pfam" id="PF00513">
    <property type="entry name" value="Late_protein_L2"/>
    <property type="match status" value="1"/>
</dbReference>
<accession>P22165</accession>